<proteinExistence type="uncertain"/>
<feature type="chain" id="PRO_0000411100" description="Putative uncharacterized protein IBA57-DT">
    <location>
        <begin position="1"/>
        <end position="110"/>
    </location>
</feature>
<evidence type="ECO:0000305" key="1"/>
<evidence type="ECO:0000312" key="2">
    <source>
        <dbReference type="HGNC" id="HGNC:32062"/>
    </source>
</evidence>
<keyword id="KW-1185">Reference proteome</keyword>
<comment type="caution">
    <text evidence="1">Product of a dubious CDS prediction.</text>
</comment>
<reference key="1">
    <citation type="journal article" date="2006" name="Nature">
        <title>The DNA sequence and biological annotation of human chromosome 1.</title>
        <authorList>
            <person name="Gregory S.G."/>
            <person name="Barlow K.F."/>
            <person name="McLay K.E."/>
            <person name="Kaul R."/>
            <person name="Swarbreck D."/>
            <person name="Dunham A."/>
            <person name="Scott C.E."/>
            <person name="Howe K.L."/>
            <person name="Woodfine K."/>
            <person name="Spencer C.C.A."/>
            <person name="Jones M.C."/>
            <person name="Gillson C."/>
            <person name="Searle S."/>
            <person name="Zhou Y."/>
            <person name="Kokocinski F."/>
            <person name="McDonald L."/>
            <person name="Evans R."/>
            <person name="Phillips K."/>
            <person name="Atkinson A."/>
            <person name="Cooper R."/>
            <person name="Jones C."/>
            <person name="Hall R.E."/>
            <person name="Andrews T.D."/>
            <person name="Lloyd C."/>
            <person name="Ainscough R."/>
            <person name="Almeida J.P."/>
            <person name="Ambrose K.D."/>
            <person name="Anderson F."/>
            <person name="Andrew R.W."/>
            <person name="Ashwell R.I.S."/>
            <person name="Aubin K."/>
            <person name="Babbage A.K."/>
            <person name="Bagguley C.L."/>
            <person name="Bailey J."/>
            <person name="Beasley H."/>
            <person name="Bethel G."/>
            <person name="Bird C.P."/>
            <person name="Bray-Allen S."/>
            <person name="Brown J.Y."/>
            <person name="Brown A.J."/>
            <person name="Buckley D."/>
            <person name="Burton J."/>
            <person name="Bye J."/>
            <person name="Carder C."/>
            <person name="Chapman J.C."/>
            <person name="Clark S.Y."/>
            <person name="Clarke G."/>
            <person name="Clee C."/>
            <person name="Cobley V."/>
            <person name="Collier R.E."/>
            <person name="Corby N."/>
            <person name="Coville G.J."/>
            <person name="Davies J."/>
            <person name="Deadman R."/>
            <person name="Dunn M."/>
            <person name="Earthrowl M."/>
            <person name="Ellington A.G."/>
            <person name="Errington H."/>
            <person name="Frankish A."/>
            <person name="Frankland J."/>
            <person name="French L."/>
            <person name="Garner P."/>
            <person name="Garnett J."/>
            <person name="Gay L."/>
            <person name="Ghori M.R.J."/>
            <person name="Gibson R."/>
            <person name="Gilby L.M."/>
            <person name="Gillett W."/>
            <person name="Glithero R.J."/>
            <person name="Grafham D.V."/>
            <person name="Griffiths C."/>
            <person name="Griffiths-Jones S."/>
            <person name="Grocock R."/>
            <person name="Hammond S."/>
            <person name="Harrison E.S.I."/>
            <person name="Hart E."/>
            <person name="Haugen E."/>
            <person name="Heath P.D."/>
            <person name="Holmes S."/>
            <person name="Holt K."/>
            <person name="Howden P.J."/>
            <person name="Hunt A.R."/>
            <person name="Hunt S.E."/>
            <person name="Hunter G."/>
            <person name="Isherwood J."/>
            <person name="James R."/>
            <person name="Johnson C."/>
            <person name="Johnson D."/>
            <person name="Joy A."/>
            <person name="Kay M."/>
            <person name="Kershaw J.K."/>
            <person name="Kibukawa M."/>
            <person name="Kimberley A.M."/>
            <person name="King A."/>
            <person name="Knights A.J."/>
            <person name="Lad H."/>
            <person name="Laird G."/>
            <person name="Lawlor S."/>
            <person name="Leongamornlert D.A."/>
            <person name="Lloyd D.M."/>
            <person name="Loveland J."/>
            <person name="Lovell J."/>
            <person name="Lush M.J."/>
            <person name="Lyne R."/>
            <person name="Martin S."/>
            <person name="Mashreghi-Mohammadi M."/>
            <person name="Matthews L."/>
            <person name="Matthews N.S.W."/>
            <person name="McLaren S."/>
            <person name="Milne S."/>
            <person name="Mistry S."/>
            <person name="Moore M.J.F."/>
            <person name="Nickerson T."/>
            <person name="O'Dell C.N."/>
            <person name="Oliver K."/>
            <person name="Palmeiri A."/>
            <person name="Palmer S.A."/>
            <person name="Parker A."/>
            <person name="Patel D."/>
            <person name="Pearce A.V."/>
            <person name="Peck A.I."/>
            <person name="Pelan S."/>
            <person name="Phelps K."/>
            <person name="Phillimore B.J."/>
            <person name="Plumb R."/>
            <person name="Rajan J."/>
            <person name="Raymond C."/>
            <person name="Rouse G."/>
            <person name="Saenphimmachak C."/>
            <person name="Sehra H.K."/>
            <person name="Sheridan E."/>
            <person name="Shownkeen R."/>
            <person name="Sims S."/>
            <person name="Skuce C.D."/>
            <person name="Smith M."/>
            <person name="Steward C."/>
            <person name="Subramanian S."/>
            <person name="Sycamore N."/>
            <person name="Tracey A."/>
            <person name="Tromans A."/>
            <person name="Van Helmond Z."/>
            <person name="Wall M."/>
            <person name="Wallis J.M."/>
            <person name="White S."/>
            <person name="Whitehead S.L."/>
            <person name="Wilkinson J.E."/>
            <person name="Willey D.L."/>
            <person name="Williams H."/>
            <person name="Wilming L."/>
            <person name="Wray P.W."/>
            <person name="Wu Z."/>
            <person name="Coulson A."/>
            <person name="Vaudin M."/>
            <person name="Sulston J.E."/>
            <person name="Durbin R.M."/>
            <person name="Hubbard T."/>
            <person name="Wooster R."/>
            <person name="Dunham I."/>
            <person name="Carter N.P."/>
            <person name="McVean G."/>
            <person name="Ross M.T."/>
            <person name="Harrow J."/>
            <person name="Olson M.V."/>
            <person name="Beck S."/>
            <person name="Rogers J."/>
            <person name="Bentley D.R."/>
        </authorList>
    </citation>
    <scope>NUCLEOTIDE SEQUENCE [LARGE SCALE GENOMIC DNA]</scope>
</reference>
<reference key="2">
    <citation type="submission" date="2005-07" db="EMBL/GenBank/DDBJ databases">
        <authorList>
            <person name="Mural R.J."/>
            <person name="Istrail S."/>
            <person name="Sutton G.G."/>
            <person name="Florea L."/>
            <person name="Halpern A.L."/>
            <person name="Mobarry C.M."/>
            <person name="Lippert R."/>
            <person name="Walenz B."/>
            <person name="Shatkay H."/>
            <person name="Dew I."/>
            <person name="Miller J.R."/>
            <person name="Flanigan M.J."/>
            <person name="Edwards N.J."/>
            <person name="Bolanos R."/>
            <person name="Fasulo D."/>
            <person name="Halldorsson B.V."/>
            <person name="Hannenhalli S."/>
            <person name="Turner R."/>
            <person name="Yooseph S."/>
            <person name="Lu F."/>
            <person name="Nusskern D.R."/>
            <person name="Shue B.C."/>
            <person name="Zheng X.H."/>
            <person name="Zhong F."/>
            <person name="Delcher A.L."/>
            <person name="Huson D.H."/>
            <person name="Kravitz S.A."/>
            <person name="Mouchard L."/>
            <person name="Reinert K."/>
            <person name="Remington K.A."/>
            <person name="Clark A.G."/>
            <person name="Waterman M.S."/>
            <person name="Eichler E.E."/>
            <person name="Adams M.D."/>
            <person name="Hunkapiller M.W."/>
            <person name="Myers E.W."/>
            <person name="Venter J.C."/>
        </authorList>
    </citation>
    <scope>NUCLEOTIDE SEQUENCE [LARGE SCALE GENOMIC DNA]</scope>
</reference>
<reference key="3">
    <citation type="journal article" date="2004" name="Nat. Genet.">
        <title>Complete sequencing and characterization of 21,243 full-length human cDNAs.</title>
        <authorList>
            <person name="Ota T."/>
            <person name="Suzuki Y."/>
            <person name="Nishikawa T."/>
            <person name="Otsuki T."/>
            <person name="Sugiyama T."/>
            <person name="Irie R."/>
            <person name="Wakamatsu A."/>
            <person name="Hayashi K."/>
            <person name="Sato H."/>
            <person name="Nagai K."/>
            <person name="Kimura K."/>
            <person name="Makita H."/>
            <person name="Sekine M."/>
            <person name="Obayashi M."/>
            <person name="Nishi T."/>
            <person name="Shibahara T."/>
            <person name="Tanaka T."/>
            <person name="Ishii S."/>
            <person name="Yamamoto J."/>
            <person name="Saito K."/>
            <person name="Kawai Y."/>
            <person name="Isono Y."/>
            <person name="Nakamura Y."/>
            <person name="Nagahari K."/>
            <person name="Murakami K."/>
            <person name="Yasuda T."/>
            <person name="Iwayanagi T."/>
            <person name="Wagatsuma M."/>
            <person name="Shiratori A."/>
            <person name="Sudo H."/>
            <person name="Hosoiri T."/>
            <person name="Kaku Y."/>
            <person name="Kodaira H."/>
            <person name="Kondo H."/>
            <person name="Sugawara M."/>
            <person name="Takahashi M."/>
            <person name="Kanda K."/>
            <person name="Yokoi T."/>
            <person name="Furuya T."/>
            <person name="Kikkawa E."/>
            <person name="Omura Y."/>
            <person name="Abe K."/>
            <person name="Kamihara K."/>
            <person name="Katsuta N."/>
            <person name="Sato K."/>
            <person name="Tanikawa M."/>
            <person name="Yamazaki M."/>
            <person name="Ninomiya K."/>
            <person name="Ishibashi T."/>
            <person name="Yamashita H."/>
            <person name="Murakawa K."/>
            <person name="Fujimori K."/>
            <person name="Tanai H."/>
            <person name="Kimata M."/>
            <person name="Watanabe M."/>
            <person name="Hiraoka S."/>
            <person name="Chiba Y."/>
            <person name="Ishida S."/>
            <person name="Ono Y."/>
            <person name="Takiguchi S."/>
            <person name="Watanabe S."/>
            <person name="Yosida M."/>
            <person name="Hotuta T."/>
            <person name="Kusano J."/>
            <person name="Kanehori K."/>
            <person name="Takahashi-Fujii A."/>
            <person name="Hara H."/>
            <person name="Tanase T.-O."/>
            <person name="Nomura Y."/>
            <person name="Togiya S."/>
            <person name="Komai F."/>
            <person name="Hara R."/>
            <person name="Takeuchi K."/>
            <person name="Arita M."/>
            <person name="Imose N."/>
            <person name="Musashino K."/>
            <person name="Yuuki H."/>
            <person name="Oshima A."/>
            <person name="Sasaki N."/>
            <person name="Aotsuka S."/>
            <person name="Yoshikawa Y."/>
            <person name="Matsunawa H."/>
            <person name="Ichihara T."/>
            <person name="Shiohata N."/>
            <person name="Sano S."/>
            <person name="Moriya S."/>
            <person name="Momiyama H."/>
            <person name="Satoh N."/>
            <person name="Takami S."/>
            <person name="Terashima Y."/>
            <person name="Suzuki O."/>
            <person name="Nakagawa S."/>
            <person name="Senoh A."/>
            <person name="Mizoguchi H."/>
            <person name="Goto Y."/>
            <person name="Shimizu F."/>
            <person name="Wakebe H."/>
            <person name="Hishigaki H."/>
            <person name="Watanabe T."/>
            <person name="Sugiyama A."/>
            <person name="Takemoto M."/>
            <person name="Kawakami B."/>
            <person name="Yamazaki M."/>
            <person name="Watanabe K."/>
            <person name="Kumagai A."/>
            <person name="Itakura S."/>
            <person name="Fukuzumi Y."/>
            <person name="Fujimori Y."/>
            <person name="Komiyama M."/>
            <person name="Tashiro H."/>
            <person name="Tanigami A."/>
            <person name="Fujiwara T."/>
            <person name="Ono T."/>
            <person name="Yamada K."/>
            <person name="Fujii Y."/>
            <person name="Ozaki K."/>
            <person name="Hirao M."/>
            <person name="Ohmori Y."/>
            <person name="Kawabata A."/>
            <person name="Hikiji T."/>
            <person name="Kobatake N."/>
            <person name="Inagaki H."/>
            <person name="Ikema Y."/>
            <person name="Okamoto S."/>
            <person name="Okitani R."/>
            <person name="Kawakami T."/>
            <person name="Noguchi S."/>
            <person name="Itoh T."/>
            <person name="Shigeta K."/>
            <person name="Senba T."/>
            <person name="Matsumura K."/>
            <person name="Nakajima Y."/>
            <person name="Mizuno T."/>
            <person name="Morinaga M."/>
            <person name="Sasaki M."/>
            <person name="Togashi T."/>
            <person name="Oyama M."/>
            <person name="Hata H."/>
            <person name="Watanabe M."/>
            <person name="Komatsu T."/>
            <person name="Mizushima-Sugano J."/>
            <person name="Satoh T."/>
            <person name="Shirai Y."/>
            <person name="Takahashi Y."/>
            <person name="Nakagawa K."/>
            <person name="Okumura K."/>
            <person name="Nagase T."/>
            <person name="Nomura N."/>
            <person name="Kikuchi H."/>
            <person name="Masuho Y."/>
            <person name="Yamashita R."/>
            <person name="Nakai K."/>
            <person name="Yada T."/>
            <person name="Nakamura Y."/>
            <person name="Ohara O."/>
            <person name="Isogai T."/>
            <person name="Sugano S."/>
        </authorList>
    </citation>
    <scope>NUCLEOTIDE SEQUENCE [LARGE SCALE MRNA] OF 1-108</scope>
</reference>
<sequence length="110" mass="12198">MTYPPHRAFSRSDVPYPLLSSPVQWPLSLVVGDTSTRWPQQPSALESDCPGPSHPCLAGLLGPMHPVDIPLSTALHSKHQRRLTQCVLMVQSPSKQRSLYLLNKKIPHDA</sequence>
<protein>
    <recommendedName>
        <fullName evidence="1">Putative uncharacterized protein IBA57-DT</fullName>
    </recommendedName>
    <alternativeName>
        <fullName evidence="2">IBA57 antisense RNA 1</fullName>
    </alternativeName>
    <alternativeName>
        <fullName>IBA57 antisense gene protein 1</fullName>
    </alternativeName>
    <alternativeName>
        <fullName evidence="2">IBA57 divergent transcripte</fullName>
    </alternativeName>
</protein>
<dbReference type="EMBL" id="AL359510">
    <property type="status" value="NOT_ANNOTATED_CDS"/>
    <property type="molecule type" value="Genomic_DNA"/>
</dbReference>
<dbReference type="EMBL" id="CH471098">
    <property type="protein sequence ID" value="EAW69861.1"/>
    <property type="molecule type" value="Genomic_DNA"/>
</dbReference>
<dbReference type="EMBL" id="AK057440">
    <property type="status" value="NOT_ANNOTATED_CDS"/>
    <property type="molecule type" value="mRNA"/>
</dbReference>
<dbReference type="SMR" id="B1ANH7"/>
<dbReference type="BioMuta" id="HGNC:32062"/>
<dbReference type="ProteomicsDB" id="3260"/>
<dbReference type="AGR" id="HGNC:32062"/>
<dbReference type="GeneCards" id="IBA57-DT"/>
<dbReference type="HGNC" id="HGNC:32062">
    <property type="gene designation" value="IBA57-DT"/>
</dbReference>
<dbReference type="neXtProt" id="NX_B1ANH7"/>
<dbReference type="InParanoid" id="B1ANH7"/>
<dbReference type="PAN-GO" id="B1ANH7">
    <property type="GO annotations" value="0 GO annotations based on evolutionary models"/>
</dbReference>
<dbReference type="Pharos" id="B1ANH7">
    <property type="development level" value="Tdark"/>
</dbReference>
<dbReference type="Proteomes" id="UP000005640">
    <property type="component" value="Unplaced"/>
</dbReference>
<dbReference type="RNAct" id="B1ANH7">
    <property type="molecule type" value="protein"/>
</dbReference>
<name>IBADT_HUMAN</name>
<accession>B1ANH7</accession>
<organism>
    <name type="scientific">Homo sapiens</name>
    <name type="common">Human</name>
    <dbReference type="NCBI Taxonomy" id="9606"/>
    <lineage>
        <taxon>Eukaryota</taxon>
        <taxon>Metazoa</taxon>
        <taxon>Chordata</taxon>
        <taxon>Craniata</taxon>
        <taxon>Vertebrata</taxon>
        <taxon>Euteleostomi</taxon>
        <taxon>Mammalia</taxon>
        <taxon>Eutheria</taxon>
        <taxon>Euarchontoglires</taxon>
        <taxon>Primates</taxon>
        <taxon>Haplorrhini</taxon>
        <taxon>Catarrhini</taxon>
        <taxon>Hominidae</taxon>
        <taxon>Homo</taxon>
    </lineage>
</organism>
<gene>
    <name evidence="2" type="primary">IBA57-DT</name>
    <name evidence="2" type="synonym">C1orf148</name>
    <name evidence="2" type="synonym">IBA57-AS1</name>
</gene>